<comment type="function">
    <text evidence="1">Part of the ABC transporter complex LolCDE involved in the translocation of mature outer membrane-directed lipoproteins, from the inner membrane to the periplasmic chaperone, LolA. Responsible for the formation of the LolA-lipoprotein complex in an ATP-dependent manner.</text>
</comment>
<comment type="subunit">
    <text evidence="1">The complex is composed of two ATP-binding proteins (LolD) and two transmembrane proteins (LolC and LolE).</text>
</comment>
<comment type="subcellular location">
    <subcellularLocation>
        <location evidence="1">Cell inner membrane</location>
        <topology evidence="1">Peripheral membrane protein</topology>
    </subcellularLocation>
</comment>
<comment type="similarity">
    <text evidence="1">Belongs to the ABC transporter superfamily. Lipoprotein translocase (TC 3.A.1.125) family.</text>
</comment>
<sequence>MSNHPLLQCINLCKRYQEGQLHTDVLRNVSFAIEPGELMAIVGSSGSGKSTLLHLLGGLDSPTSGEVIYQGRSLNQLSSTAKAELRNRELGFIYQFHHLLPDFTALENVAMPLLIGGSKPAEAQEKAHEMLAAVGLEKRSKHRPSELSGGERQRVAIARSLVNNPSLVLADEPTGNLDQRNADSIFNLLGELNVRQGTAFLVVTHDLQLAKRMSRQLEMRDGQLQHHLTLVGAE</sequence>
<dbReference type="EC" id="7.6.2.-" evidence="1"/>
<dbReference type="EMBL" id="AL590842">
    <property type="protein sequence ID" value="CAL20272.1"/>
    <property type="molecule type" value="Genomic_DNA"/>
</dbReference>
<dbReference type="EMBL" id="AE009952">
    <property type="protein sequence ID" value="AAM85354.1"/>
    <property type="molecule type" value="Genomic_DNA"/>
</dbReference>
<dbReference type="EMBL" id="AE017042">
    <property type="protein sequence ID" value="AAS61983.1"/>
    <property type="molecule type" value="Genomic_DNA"/>
</dbReference>
<dbReference type="PIR" id="AF0198">
    <property type="entry name" value="AF0198"/>
</dbReference>
<dbReference type="RefSeq" id="WP_002210923.1">
    <property type="nucleotide sequence ID" value="NZ_WUCM01000020.1"/>
</dbReference>
<dbReference type="RefSeq" id="YP_002346638.1">
    <property type="nucleotide sequence ID" value="NC_003143.1"/>
</dbReference>
<dbReference type="SMR" id="Q8ZFR4"/>
<dbReference type="STRING" id="214092.YPO1627"/>
<dbReference type="PaxDb" id="214092-YPO1627"/>
<dbReference type="DNASU" id="1146733"/>
<dbReference type="EnsemblBacteria" id="AAS61983">
    <property type="protein sequence ID" value="AAS61983"/>
    <property type="gene ID" value="YP_1756"/>
</dbReference>
<dbReference type="GeneID" id="57976946"/>
<dbReference type="KEGG" id="ype:YPO1627"/>
<dbReference type="KEGG" id="ypk:y1786"/>
<dbReference type="KEGG" id="ypm:YP_1756"/>
<dbReference type="PATRIC" id="fig|214092.21.peg.1971"/>
<dbReference type="eggNOG" id="COG1136">
    <property type="taxonomic scope" value="Bacteria"/>
</dbReference>
<dbReference type="HOGENOM" id="CLU_000604_1_22_6"/>
<dbReference type="OMA" id="DHHTAQG"/>
<dbReference type="OrthoDB" id="9801477at2"/>
<dbReference type="Proteomes" id="UP000000815">
    <property type="component" value="Chromosome"/>
</dbReference>
<dbReference type="Proteomes" id="UP000001019">
    <property type="component" value="Chromosome"/>
</dbReference>
<dbReference type="Proteomes" id="UP000002490">
    <property type="component" value="Chromosome"/>
</dbReference>
<dbReference type="GO" id="GO:0005886">
    <property type="term" value="C:plasma membrane"/>
    <property type="evidence" value="ECO:0000318"/>
    <property type="project" value="GO_Central"/>
</dbReference>
<dbReference type="GO" id="GO:0005524">
    <property type="term" value="F:ATP binding"/>
    <property type="evidence" value="ECO:0007669"/>
    <property type="project" value="UniProtKB-KW"/>
</dbReference>
<dbReference type="GO" id="GO:0016887">
    <property type="term" value="F:ATP hydrolysis activity"/>
    <property type="evidence" value="ECO:0007669"/>
    <property type="project" value="InterPro"/>
</dbReference>
<dbReference type="GO" id="GO:0022857">
    <property type="term" value="F:transmembrane transporter activity"/>
    <property type="evidence" value="ECO:0000318"/>
    <property type="project" value="GO_Central"/>
</dbReference>
<dbReference type="GO" id="GO:0044874">
    <property type="term" value="P:lipoprotein localization to outer membrane"/>
    <property type="evidence" value="ECO:0000318"/>
    <property type="project" value="GO_Central"/>
</dbReference>
<dbReference type="GO" id="GO:0089705">
    <property type="term" value="P:protein localization to outer membrane"/>
    <property type="evidence" value="ECO:0000318"/>
    <property type="project" value="GO_Central"/>
</dbReference>
<dbReference type="GO" id="GO:0055085">
    <property type="term" value="P:transmembrane transport"/>
    <property type="evidence" value="ECO:0000318"/>
    <property type="project" value="GO_Central"/>
</dbReference>
<dbReference type="CDD" id="cd03255">
    <property type="entry name" value="ABC_MJ0796_LolCDE_FtsE"/>
    <property type="match status" value="1"/>
</dbReference>
<dbReference type="FunFam" id="3.40.50.300:FF:000230">
    <property type="entry name" value="Lipoprotein-releasing system ATP-binding protein LolD"/>
    <property type="match status" value="1"/>
</dbReference>
<dbReference type="Gene3D" id="3.40.50.300">
    <property type="entry name" value="P-loop containing nucleotide triphosphate hydrolases"/>
    <property type="match status" value="1"/>
</dbReference>
<dbReference type="InterPro" id="IPR003593">
    <property type="entry name" value="AAA+_ATPase"/>
</dbReference>
<dbReference type="InterPro" id="IPR003439">
    <property type="entry name" value="ABC_transporter-like_ATP-bd"/>
</dbReference>
<dbReference type="InterPro" id="IPR017871">
    <property type="entry name" value="ABC_transporter-like_CS"/>
</dbReference>
<dbReference type="InterPro" id="IPR015854">
    <property type="entry name" value="ABC_transpr_LolD-like"/>
</dbReference>
<dbReference type="InterPro" id="IPR011924">
    <property type="entry name" value="LolD_lipo_ATP-bd"/>
</dbReference>
<dbReference type="InterPro" id="IPR017911">
    <property type="entry name" value="MacB-like_ATP-bd"/>
</dbReference>
<dbReference type="InterPro" id="IPR027417">
    <property type="entry name" value="P-loop_NTPase"/>
</dbReference>
<dbReference type="NCBIfam" id="TIGR02211">
    <property type="entry name" value="LolD_lipo_ex"/>
    <property type="match status" value="1"/>
</dbReference>
<dbReference type="NCBIfam" id="NF008639">
    <property type="entry name" value="PRK11629.1"/>
    <property type="match status" value="1"/>
</dbReference>
<dbReference type="PANTHER" id="PTHR24220">
    <property type="entry name" value="IMPORT ATP-BINDING PROTEIN"/>
    <property type="match status" value="1"/>
</dbReference>
<dbReference type="PANTHER" id="PTHR24220:SF689">
    <property type="entry name" value="LIPOPROTEIN-RELEASING SYSTEM ATP-BINDING PROTEIN LOLD"/>
    <property type="match status" value="1"/>
</dbReference>
<dbReference type="Pfam" id="PF00005">
    <property type="entry name" value="ABC_tran"/>
    <property type="match status" value="1"/>
</dbReference>
<dbReference type="SMART" id="SM00382">
    <property type="entry name" value="AAA"/>
    <property type="match status" value="1"/>
</dbReference>
<dbReference type="SUPFAM" id="SSF52540">
    <property type="entry name" value="P-loop containing nucleoside triphosphate hydrolases"/>
    <property type="match status" value="1"/>
</dbReference>
<dbReference type="PROSITE" id="PS00211">
    <property type="entry name" value="ABC_TRANSPORTER_1"/>
    <property type="match status" value="1"/>
</dbReference>
<dbReference type="PROSITE" id="PS50893">
    <property type="entry name" value="ABC_TRANSPORTER_2"/>
    <property type="match status" value="1"/>
</dbReference>
<dbReference type="PROSITE" id="PS51244">
    <property type="entry name" value="LOLD"/>
    <property type="match status" value="1"/>
</dbReference>
<reference key="1">
    <citation type="journal article" date="2001" name="Nature">
        <title>Genome sequence of Yersinia pestis, the causative agent of plague.</title>
        <authorList>
            <person name="Parkhill J."/>
            <person name="Wren B.W."/>
            <person name="Thomson N.R."/>
            <person name="Titball R.W."/>
            <person name="Holden M.T.G."/>
            <person name="Prentice M.B."/>
            <person name="Sebaihia M."/>
            <person name="James K.D."/>
            <person name="Churcher C.M."/>
            <person name="Mungall K.L."/>
            <person name="Baker S."/>
            <person name="Basham D."/>
            <person name="Bentley S.D."/>
            <person name="Brooks K."/>
            <person name="Cerdeno-Tarraga A.-M."/>
            <person name="Chillingworth T."/>
            <person name="Cronin A."/>
            <person name="Davies R.M."/>
            <person name="Davis P."/>
            <person name="Dougan G."/>
            <person name="Feltwell T."/>
            <person name="Hamlin N."/>
            <person name="Holroyd S."/>
            <person name="Jagels K."/>
            <person name="Karlyshev A.V."/>
            <person name="Leather S."/>
            <person name="Moule S."/>
            <person name="Oyston P.C.F."/>
            <person name="Quail M.A."/>
            <person name="Rutherford K.M."/>
            <person name="Simmonds M."/>
            <person name="Skelton J."/>
            <person name="Stevens K."/>
            <person name="Whitehead S."/>
            <person name="Barrell B.G."/>
        </authorList>
    </citation>
    <scope>NUCLEOTIDE SEQUENCE [LARGE SCALE GENOMIC DNA]</scope>
    <source>
        <strain>CO-92 / Biovar Orientalis</strain>
    </source>
</reference>
<reference key="2">
    <citation type="journal article" date="2002" name="J. Bacteriol.">
        <title>Genome sequence of Yersinia pestis KIM.</title>
        <authorList>
            <person name="Deng W."/>
            <person name="Burland V."/>
            <person name="Plunkett G. III"/>
            <person name="Boutin A."/>
            <person name="Mayhew G.F."/>
            <person name="Liss P."/>
            <person name="Perna N.T."/>
            <person name="Rose D.J."/>
            <person name="Mau B."/>
            <person name="Zhou S."/>
            <person name="Schwartz D.C."/>
            <person name="Fetherston J.D."/>
            <person name="Lindler L.E."/>
            <person name="Brubaker R.R."/>
            <person name="Plano G.V."/>
            <person name="Straley S.C."/>
            <person name="McDonough K.A."/>
            <person name="Nilles M.L."/>
            <person name="Matson J.S."/>
            <person name="Blattner F.R."/>
            <person name="Perry R.D."/>
        </authorList>
    </citation>
    <scope>NUCLEOTIDE SEQUENCE [LARGE SCALE GENOMIC DNA]</scope>
    <source>
        <strain>KIM10+ / Biovar Mediaevalis</strain>
    </source>
</reference>
<reference key="3">
    <citation type="journal article" date="2004" name="DNA Res.">
        <title>Complete genome sequence of Yersinia pestis strain 91001, an isolate avirulent to humans.</title>
        <authorList>
            <person name="Song Y."/>
            <person name="Tong Z."/>
            <person name="Wang J."/>
            <person name="Wang L."/>
            <person name="Guo Z."/>
            <person name="Han Y."/>
            <person name="Zhang J."/>
            <person name="Pei D."/>
            <person name="Zhou D."/>
            <person name="Qin H."/>
            <person name="Pang X."/>
            <person name="Han Y."/>
            <person name="Zhai J."/>
            <person name="Li M."/>
            <person name="Cui B."/>
            <person name="Qi Z."/>
            <person name="Jin L."/>
            <person name="Dai R."/>
            <person name="Chen F."/>
            <person name="Li S."/>
            <person name="Ye C."/>
            <person name="Du Z."/>
            <person name="Lin W."/>
            <person name="Wang J."/>
            <person name="Yu J."/>
            <person name="Yang H."/>
            <person name="Wang J."/>
            <person name="Huang P."/>
            <person name="Yang R."/>
        </authorList>
    </citation>
    <scope>NUCLEOTIDE SEQUENCE [LARGE SCALE GENOMIC DNA]</scope>
    <source>
        <strain>91001 / Biovar Mediaevalis</strain>
    </source>
</reference>
<evidence type="ECO:0000255" key="1">
    <source>
        <dbReference type="HAMAP-Rule" id="MF_01708"/>
    </source>
</evidence>
<gene>
    <name evidence="1" type="primary">lolD</name>
    <name type="ordered locus">YPO1627</name>
    <name type="ordered locus">y1786</name>
    <name type="ordered locus">YP_1756</name>
</gene>
<accession>Q8ZFR4</accession>
<accession>Q0WGF0</accession>
<name>LOLD_YERPE</name>
<feature type="chain" id="PRO_0000092472" description="Lipoprotein-releasing system ATP-binding protein LolD">
    <location>
        <begin position="1"/>
        <end position="234"/>
    </location>
</feature>
<feature type="domain" description="ABC transporter" evidence="1">
    <location>
        <begin position="7"/>
        <end position="233"/>
    </location>
</feature>
<feature type="binding site" evidence="1">
    <location>
        <begin position="43"/>
        <end position="50"/>
    </location>
    <ligand>
        <name>ATP</name>
        <dbReference type="ChEBI" id="CHEBI:30616"/>
    </ligand>
</feature>
<organism>
    <name type="scientific">Yersinia pestis</name>
    <dbReference type="NCBI Taxonomy" id="632"/>
    <lineage>
        <taxon>Bacteria</taxon>
        <taxon>Pseudomonadati</taxon>
        <taxon>Pseudomonadota</taxon>
        <taxon>Gammaproteobacteria</taxon>
        <taxon>Enterobacterales</taxon>
        <taxon>Yersiniaceae</taxon>
        <taxon>Yersinia</taxon>
    </lineage>
</organism>
<proteinExistence type="inferred from homology"/>
<protein>
    <recommendedName>
        <fullName evidence="1">Lipoprotein-releasing system ATP-binding protein LolD</fullName>
        <ecNumber evidence="1">7.6.2.-</ecNumber>
    </recommendedName>
</protein>
<keyword id="KW-0067">ATP-binding</keyword>
<keyword id="KW-0997">Cell inner membrane</keyword>
<keyword id="KW-1003">Cell membrane</keyword>
<keyword id="KW-0472">Membrane</keyword>
<keyword id="KW-0547">Nucleotide-binding</keyword>
<keyword id="KW-1185">Reference proteome</keyword>
<keyword id="KW-1278">Translocase</keyword>
<keyword id="KW-0813">Transport</keyword>